<protein>
    <recommendedName>
        <fullName evidence="4">Oligopeptidase PepF</fullName>
        <ecNumber evidence="5">3.4.24.-</ecNumber>
    </recommendedName>
</protein>
<evidence type="ECO:0000250" key="1">
    <source>
        <dbReference type="UniProtKB" id="P52888"/>
    </source>
</evidence>
<evidence type="ECO:0000255" key="2">
    <source>
        <dbReference type="PROSITE-ProRule" id="PRU10095"/>
    </source>
</evidence>
<evidence type="ECO:0000269" key="3">
    <source>
    </source>
</evidence>
<evidence type="ECO:0000303" key="4">
    <source>
    </source>
</evidence>
<evidence type="ECO:0000305" key="5"/>
<evidence type="ECO:0000305" key="6">
    <source>
    </source>
</evidence>
<comment type="function">
    <text evidence="3">Overexpression results in inhibition of sporulation initiation (PubMed:11741842). This sporulation deficiency could be the result of hydrolysis by PepF of the PhrA peptide, a phosphatase regulator (PubMed:11741842). Thus, overexpression of PepF appears to act at the level of the phosphorelay, most likely through modulation of the negative role played by phosphatases (PubMed:11741842). Overexpression of PepF also affects the activity of the competence and sporulation stimulating factor PhrC (PubMed:11741842).</text>
</comment>
<comment type="cofactor">
    <cofactor evidence="1">
        <name>Zn(2+)</name>
        <dbReference type="ChEBI" id="CHEBI:29105"/>
    </cofactor>
    <text evidence="1">Binds 1 zinc ion.</text>
</comment>
<comment type="subcellular location">
    <subcellularLocation>
        <location evidence="6">Cytoplasm</location>
    </subcellularLocation>
</comment>
<comment type="induction">
    <text evidence="3">Expressed at a low level during exponential phase and induced twofold immediately after the transition to stationary phase (PubMed:11741842). This induction is dependent on the sporulation transcription factor Spo0A through an indirect mechanism (PubMed:11741842).</text>
</comment>
<comment type="disruption phenotype">
    <text evidence="3">Inactivation of the gene does not cause any detectable phenotype in sporulation growth conditions (PubMed:11741842). Deletion does not affect cell growth in rich or minimal medium (PubMed:11741842).</text>
</comment>
<comment type="similarity">
    <text evidence="5">Belongs to the peptidase M3B family.</text>
</comment>
<feature type="chain" id="PRO_0000078165" description="Oligopeptidase PepF">
    <location>
        <begin position="1"/>
        <end position="670"/>
    </location>
</feature>
<feature type="active site" evidence="2">
    <location>
        <position position="457"/>
    </location>
</feature>
<feature type="binding site" evidence="2">
    <location>
        <position position="456"/>
    </location>
    <ligand>
        <name>Zn(2+)</name>
        <dbReference type="ChEBI" id="CHEBI:29105"/>
        <note>catalytic</note>
    </ligand>
</feature>
<feature type="binding site" evidence="2">
    <location>
        <position position="460"/>
    </location>
    <ligand>
        <name>Zn(2+)</name>
        <dbReference type="ChEBI" id="CHEBI:29105"/>
        <note>catalytic</note>
    </ligand>
</feature>
<feature type="binding site" evidence="2">
    <location>
        <position position="463"/>
    </location>
    <ligand>
        <name>Zn(2+)</name>
        <dbReference type="ChEBI" id="CHEBI:29105"/>
        <note>catalytic</note>
    </ligand>
</feature>
<organism>
    <name type="scientific">Bacillus subtilis (strain 168)</name>
    <dbReference type="NCBI Taxonomy" id="224308"/>
    <lineage>
        <taxon>Bacteria</taxon>
        <taxon>Bacillati</taxon>
        <taxon>Bacillota</taxon>
        <taxon>Bacilli</taxon>
        <taxon>Bacillales</taxon>
        <taxon>Bacillaceae</taxon>
        <taxon>Bacillus</taxon>
    </lineage>
</organism>
<proteinExistence type="evidence at transcript level"/>
<keyword id="KW-0963">Cytoplasm</keyword>
<keyword id="KW-0378">Hydrolase</keyword>
<keyword id="KW-0479">Metal-binding</keyword>
<keyword id="KW-0482">Metalloprotease</keyword>
<keyword id="KW-0645">Protease</keyword>
<keyword id="KW-1185">Reference proteome</keyword>
<keyword id="KW-0862">Zinc</keyword>
<reference key="1">
    <citation type="journal article" date="1997" name="Nature">
        <title>The complete genome sequence of the Gram-positive bacterium Bacillus subtilis.</title>
        <authorList>
            <person name="Kunst F."/>
            <person name="Ogasawara N."/>
            <person name="Moszer I."/>
            <person name="Albertini A.M."/>
            <person name="Alloni G."/>
            <person name="Azevedo V."/>
            <person name="Bertero M.G."/>
            <person name="Bessieres P."/>
            <person name="Bolotin A."/>
            <person name="Borchert S."/>
            <person name="Borriss R."/>
            <person name="Boursier L."/>
            <person name="Brans A."/>
            <person name="Braun M."/>
            <person name="Brignell S.C."/>
            <person name="Bron S."/>
            <person name="Brouillet S."/>
            <person name="Bruschi C.V."/>
            <person name="Caldwell B."/>
            <person name="Capuano V."/>
            <person name="Carter N.M."/>
            <person name="Choi S.-K."/>
            <person name="Codani J.-J."/>
            <person name="Connerton I.F."/>
            <person name="Cummings N.J."/>
            <person name="Daniel R.A."/>
            <person name="Denizot F."/>
            <person name="Devine K.M."/>
            <person name="Duesterhoeft A."/>
            <person name="Ehrlich S.D."/>
            <person name="Emmerson P.T."/>
            <person name="Entian K.-D."/>
            <person name="Errington J."/>
            <person name="Fabret C."/>
            <person name="Ferrari E."/>
            <person name="Foulger D."/>
            <person name="Fritz C."/>
            <person name="Fujita M."/>
            <person name="Fujita Y."/>
            <person name="Fuma S."/>
            <person name="Galizzi A."/>
            <person name="Galleron N."/>
            <person name="Ghim S.-Y."/>
            <person name="Glaser P."/>
            <person name="Goffeau A."/>
            <person name="Golightly E.J."/>
            <person name="Grandi G."/>
            <person name="Guiseppi G."/>
            <person name="Guy B.J."/>
            <person name="Haga K."/>
            <person name="Haiech J."/>
            <person name="Harwood C.R."/>
            <person name="Henaut A."/>
            <person name="Hilbert H."/>
            <person name="Holsappel S."/>
            <person name="Hosono S."/>
            <person name="Hullo M.-F."/>
            <person name="Itaya M."/>
            <person name="Jones L.-M."/>
            <person name="Joris B."/>
            <person name="Karamata D."/>
            <person name="Kasahara Y."/>
            <person name="Klaerr-Blanchard M."/>
            <person name="Klein C."/>
            <person name="Kobayashi Y."/>
            <person name="Koetter P."/>
            <person name="Koningstein G."/>
            <person name="Krogh S."/>
            <person name="Kumano M."/>
            <person name="Kurita K."/>
            <person name="Lapidus A."/>
            <person name="Lardinois S."/>
            <person name="Lauber J."/>
            <person name="Lazarevic V."/>
            <person name="Lee S.-M."/>
            <person name="Levine A."/>
            <person name="Liu H."/>
            <person name="Masuda S."/>
            <person name="Mauel C."/>
            <person name="Medigue C."/>
            <person name="Medina N."/>
            <person name="Mellado R.P."/>
            <person name="Mizuno M."/>
            <person name="Moestl D."/>
            <person name="Nakai S."/>
            <person name="Noback M."/>
            <person name="Noone D."/>
            <person name="O'Reilly M."/>
            <person name="Ogawa K."/>
            <person name="Ogiwara A."/>
            <person name="Oudega B."/>
            <person name="Park S.-H."/>
            <person name="Parro V."/>
            <person name="Pohl T.M."/>
            <person name="Portetelle D."/>
            <person name="Porwollik S."/>
            <person name="Prescott A.M."/>
            <person name="Presecan E."/>
            <person name="Pujic P."/>
            <person name="Purnelle B."/>
            <person name="Rapoport G."/>
            <person name="Rey M."/>
            <person name="Reynolds S."/>
            <person name="Rieger M."/>
            <person name="Rivolta C."/>
            <person name="Rocha E."/>
            <person name="Roche B."/>
            <person name="Rose M."/>
            <person name="Sadaie Y."/>
            <person name="Sato T."/>
            <person name="Scanlan E."/>
            <person name="Schleich S."/>
            <person name="Schroeter R."/>
            <person name="Scoffone F."/>
            <person name="Sekiguchi J."/>
            <person name="Sekowska A."/>
            <person name="Seror S.J."/>
            <person name="Serror P."/>
            <person name="Shin B.-S."/>
            <person name="Soldo B."/>
            <person name="Sorokin A."/>
            <person name="Tacconi E."/>
            <person name="Takagi T."/>
            <person name="Takahashi H."/>
            <person name="Takemaru K."/>
            <person name="Takeuchi M."/>
            <person name="Tamakoshi A."/>
            <person name="Tanaka T."/>
            <person name="Terpstra P."/>
            <person name="Tognoni A."/>
            <person name="Tosato V."/>
            <person name="Uchiyama S."/>
            <person name="Vandenbol M."/>
            <person name="Vannier F."/>
            <person name="Vassarotti A."/>
            <person name="Viari A."/>
            <person name="Wambutt R."/>
            <person name="Wedler E."/>
            <person name="Wedler H."/>
            <person name="Weitzenegger T."/>
            <person name="Winters P."/>
            <person name="Wipat A."/>
            <person name="Yamamoto H."/>
            <person name="Yamane K."/>
            <person name="Yasumoto K."/>
            <person name="Yata K."/>
            <person name="Yoshida K."/>
            <person name="Yoshikawa H.-F."/>
            <person name="Zumstein E."/>
            <person name="Yoshikawa H."/>
            <person name="Danchin A."/>
        </authorList>
    </citation>
    <scope>NUCLEOTIDE SEQUENCE [LARGE SCALE GENOMIC DNA]</scope>
    <source>
        <strain>168</strain>
    </source>
</reference>
<reference key="2">
    <citation type="journal article" date="2009" name="Microbiology">
        <title>From a consortium sequence to a unified sequence: the Bacillus subtilis 168 reference genome a decade later.</title>
        <authorList>
            <person name="Barbe V."/>
            <person name="Cruveiller S."/>
            <person name="Kunst F."/>
            <person name="Lenoble P."/>
            <person name="Meurice G."/>
            <person name="Sekowska A."/>
            <person name="Vallenet D."/>
            <person name="Wang T."/>
            <person name="Moszer I."/>
            <person name="Medigue C."/>
            <person name="Danchin A."/>
        </authorList>
    </citation>
    <scope>SEQUENCE REVISION TO 172 AND N-TERMINUS</scope>
</reference>
<reference key="3">
    <citation type="journal article" date="2002" name="J. Bacteriol.">
        <title>Overexpression of the PepF oligopeptidase inhibits sporulation initiation in Bacillus subtilis.</title>
        <authorList>
            <person name="Kanamaru K."/>
            <person name="Stephenson S."/>
            <person name="Perego M."/>
        </authorList>
    </citation>
    <scope>FUNCTION</scope>
    <scope>INDUCTION</scope>
    <scope>DISRUPTION PHENOTYPE</scope>
    <source>
        <strain>168 / JH642</strain>
    </source>
</reference>
<name>PEPF_BACSU</name>
<gene>
    <name evidence="4" type="primary">pepF</name>
    <name type="synonym">yjbG</name>
    <name type="ordered locus">BSU11540</name>
</gene>
<accession>O31605</accession>
<dbReference type="EC" id="3.4.24.-" evidence="5"/>
<dbReference type="EMBL" id="AL009126">
    <property type="protein sequence ID" value="CAB13011.2"/>
    <property type="molecule type" value="Genomic_DNA"/>
</dbReference>
<dbReference type="PIR" id="G69843">
    <property type="entry name" value="G69843"/>
</dbReference>
<dbReference type="RefSeq" id="NP_389036.2">
    <property type="nucleotide sequence ID" value="NC_000964.3"/>
</dbReference>
<dbReference type="RefSeq" id="WP_009967010.1">
    <property type="nucleotide sequence ID" value="NC_000964.3"/>
</dbReference>
<dbReference type="SMR" id="O31605"/>
<dbReference type="FunCoup" id="O31605">
    <property type="interactions" value="5"/>
</dbReference>
<dbReference type="IntAct" id="O31605">
    <property type="interactions" value="3"/>
</dbReference>
<dbReference type="MINT" id="O31605"/>
<dbReference type="STRING" id="224308.BSU11540"/>
<dbReference type="MEROPS" id="M03.007"/>
<dbReference type="jPOST" id="O31605"/>
<dbReference type="PaxDb" id="224308-BSU11540"/>
<dbReference type="EnsemblBacteria" id="CAB13011">
    <property type="protein sequence ID" value="CAB13011"/>
    <property type="gene ID" value="BSU_11540"/>
</dbReference>
<dbReference type="GeneID" id="936404"/>
<dbReference type="KEGG" id="bsu:BSU11540"/>
<dbReference type="PATRIC" id="fig|224308.179.peg.1241"/>
<dbReference type="eggNOG" id="COG1164">
    <property type="taxonomic scope" value="Bacteria"/>
</dbReference>
<dbReference type="InParanoid" id="O31605"/>
<dbReference type="OrthoDB" id="9766487at2"/>
<dbReference type="PhylomeDB" id="O31605"/>
<dbReference type="BioCyc" id="BSUB:BSU11540-MONOMER"/>
<dbReference type="Proteomes" id="UP000001570">
    <property type="component" value="Chromosome"/>
</dbReference>
<dbReference type="GO" id="GO:0005737">
    <property type="term" value="C:cytoplasm"/>
    <property type="evidence" value="ECO:0007669"/>
    <property type="project" value="UniProtKB-SubCell"/>
</dbReference>
<dbReference type="GO" id="GO:0046872">
    <property type="term" value="F:metal ion binding"/>
    <property type="evidence" value="ECO:0007669"/>
    <property type="project" value="UniProtKB-KW"/>
</dbReference>
<dbReference type="GO" id="GO:0004222">
    <property type="term" value="F:metalloendopeptidase activity"/>
    <property type="evidence" value="ECO:0000318"/>
    <property type="project" value="GO_Central"/>
</dbReference>
<dbReference type="GO" id="GO:0006518">
    <property type="term" value="P:peptide metabolic process"/>
    <property type="evidence" value="ECO:0000318"/>
    <property type="project" value="GO_Central"/>
</dbReference>
<dbReference type="GO" id="GO:0006508">
    <property type="term" value="P:proteolysis"/>
    <property type="evidence" value="ECO:0000318"/>
    <property type="project" value="GO_Central"/>
</dbReference>
<dbReference type="CDD" id="cd09608">
    <property type="entry name" value="M3B_PepF"/>
    <property type="match status" value="1"/>
</dbReference>
<dbReference type="Gene3D" id="1.10.1370.20">
    <property type="entry name" value="Oligoendopeptidase f, C-terminal domain"/>
    <property type="match status" value="1"/>
</dbReference>
<dbReference type="Gene3D" id="1.20.140.70">
    <property type="entry name" value="Oligopeptidase f, N-terminal domain"/>
    <property type="match status" value="1"/>
</dbReference>
<dbReference type="Gene3D" id="1.10.287.830">
    <property type="entry name" value="putative peptidase helix hairpin domain like"/>
    <property type="match status" value="1"/>
</dbReference>
<dbReference type="InterPro" id="IPR013647">
    <property type="entry name" value="OligopepF_N_dom"/>
</dbReference>
<dbReference type="InterPro" id="IPR042088">
    <property type="entry name" value="OligoPept_F_C"/>
</dbReference>
<dbReference type="InterPro" id="IPR045090">
    <property type="entry name" value="Pept_M3A_M3B"/>
</dbReference>
<dbReference type="InterPro" id="IPR001567">
    <property type="entry name" value="Pept_M3A_M3B_dom"/>
</dbReference>
<dbReference type="InterPro" id="IPR004438">
    <property type="entry name" value="Peptidase_M3B"/>
</dbReference>
<dbReference type="NCBIfam" id="TIGR00181">
    <property type="entry name" value="pepF"/>
    <property type="match status" value="1"/>
</dbReference>
<dbReference type="PANTHER" id="PTHR11804">
    <property type="entry name" value="PROTEASE M3 THIMET OLIGOPEPTIDASE-RELATED"/>
    <property type="match status" value="1"/>
</dbReference>
<dbReference type="PANTHER" id="PTHR11804:SF84">
    <property type="entry name" value="SACCHAROLYSIN"/>
    <property type="match status" value="1"/>
</dbReference>
<dbReference type="Pfam" id="PF01432">
    <property type="entry name" value="Peptidase_M3"/>
    <property type="match status" value="1"/>
</dbReference>
<dbReference type="Pfam" id="PF08439">
    <property type="entry name" value="Peptidase_M3_N"/>
    <property type="match status" value="1"/>
</dbReference>
<dbReference type="SUPFAM" id="SSF55486">
    <property type="entry name" value="Metalloproteases ('zincins'), catalytic domain"/>
    <property type="match status" value="1"/>
</dbReference>
<dbReference type="PROSITE" id="PS00142">
    <property type="entry name" value="ZINC_PROTEASE"/>
    <property type="match status" value="1"/>
</dbReference>
<sequence>MKGTKGKVFRVFTAFLAFVLFITAYDLTKGSEKPEDIHNTSLLRNSCFFNWLESKKTRGITMAEEKKANQLPDRSEVKAEDTWRLEDIFPSDEAWNKEFQAVKELIPNLSKYKGKLADSADHLYEALTYQDKVMERLGRLYTYAHMRSDQDTGNSFYQGLNDKAGNLYTQAASATAYLVPEILSIEEDKLQQFILEKEELKLYSHAIEEITKERPHVLSEKEEALLAEASEVLGSSSNTFSVLNNADITFPSIKDEDGNEKQITHGNFINFLESENREVRKNAFDAVYKTYGQYKNTMATTLSGTVKKDNFYARVKKYKSAREAALSNNSIPEEVYDNLVKTINKHLPLLHRYIALRKKVLELDEVHIYDLYTPLVKDAGMKVTYEEAKDYMLKGLAPLGEEYASILKEGLENRWVDVYENKGKRNGAYSSGAYGTNPYILMNWHNNVNNLFTLVHEFGHSVHSYYTRKHQPYPYGNYSIFVAEVASTTNEALLGEYLLNNLEDEKQRLYILNHMLEGFRGTVFRQTMFAEFEHLIHTKAQEGEPLTPELLTNVYYDLNKKYFGDGMVIDKEIGLEWSRIPHFYYNYYVYQYATGYSAAQALSSQILKEGKPAVDRYIDFLKAGSSQYPIDVLKKAGVDMTSPEPIEAACKMFEEKLDEMEELLMKVKQS</sequence>